<accession>Q6P5L8</accession>
<comment type="function">
    <text evidence="1">Has apparently no steroid dehydrogenase activity. Might act as a metabolic regulator that affects systemic adaptation to nutritional cues.</text>
</comment>
<comment type="subcellular location">
    <subcellularLocation>
        <location evidence="1">Peroxisome</location>
    </subcellularLocation>
    <subcellularLocation>
        <location evidence="1">Mitochondrion</location>
    </subcellularLocation>
</comment>
<comment type="similarity">
    <text evidence="3">Belongs to the short-chain dehydrogenases/reductases (SDR) family.</text>
</comment>
<organism>
    <name type="scientific">Danio rerio</name>
    <name type="common">Zebrafish</name>
    <name type="synonym">Brachydanio rerio</name>
    <dbReference type="NCBI Taxonomy" id="7955"/>
    <lineage>
        <taxon>Eukaryota</taxon>
        <taxon>Metazoa</taxon>
        <taxon>Chordata</taxon>
        <taxon>Craniata</taxon>
        <taxon>Vertebrata</taxon>
        <taxon>Euteleostomi</taxon>
        <taxon>Actinopterygii</taxon>
        <taxon>Neopterygii</taxon>
        <taxon>Teleostei</taxon>
        <taxon>Ostariophysi</taxon>
        <taxon>Cypriniformes</taxon>
        <taxon>Danionidae</taxon>
        <taxon>Danioninae</taxon>
        <taxon>Danio</taxon>
    </lineage>
</organism>
<reference key="1">
    <citation type="submission" date="2003-11" db="EMBL/GenBank/DDBJ databases">
        <authorList>
            <consortium name="NIH - Zebrafish Gene Collection (ZGC) project"/>
        </authorList>
    </citation>
    <scope>NUCLEOTIDE SEQUENCE [LARGE SCALE MRNA]</scope>
</reference>
<gene>
    <name type="primary">hsdl2</name>
</gene>
<dbReference type="EC" id="1.-.-.-"/>
<dbReference type="EMBL" id="BC062838">
    <property type="protein sequence ID" value="AAH62838.1"/>
    <property type="molecule type" value="mRNA"/>
</dbReference>
<dbReference type="RefSeq" id="NP_955893.1">
    <property type="nucleotide sequence ID" value="NM_199599.2"/>
</dbReference>
<dbReference type="RefSeq" id="XP_005155648.1">
    <property type="nucleotide sequence ID" value="XM_005155591.3"/>
</dbReference>
<dbReference type="RefSeq" id="XP_005155649.1">
    <property type="nucleotide sequence ID" value="XM_005155592.3"/>
</dbReference>
<dbReference type="SMR" id="Q6P5L8"/>
<dbReference type="FunCoup" id="Q6P5L8">
    <property type="interactions" value="1142"/>
</dbReference>
<dbReference type="STRING" id="7955.ENSDARP00000038205"/>
<dbReference type="PaxDb" id="7955-ENSDARP00000129592"/>
<dbReference type="DNASU" id="322347"/>
<dbReference type="Ensembl" id="ENSDART00000038888">
    <property type="protein sequence ID" value="ENSDARP00000038205"/>
    <property type="gene ID" value="ENSDARG00000002523"/>
</dbReference>
<dbReference type="Ensembl" id="ENSDART00000155742">
    <property type="protein sequence ID" value="ENSDARP00000129592"/>
    <property type="gene ID" value="ENSDARG00000002523"/>
</dbReference>
<dbReference type="GeneID" id="322347"/>
<dbReference type="KEGG" id="dre:322347"/>
<dbReference type="AGR" id="ZFIN:ZDB-GENE-030131-1066"/>
<dbReference type="CTD" id="84263"/>
<dbReference type="ZFIN" id="ZDB-GENE-030131-1066">
    <property type="gene designation" value="hsdl2"/>
</dbReference>
<dbReference type="eggNOG" id="KOG0725">
    <property type="taxonomic scope" value="Eukaryota"/>
</dbReference>
<dbReference type="eggNOG" id="KOG4170">
    <property type="taxonomic scope" value="Eukaryota"/>
</dbReference>
<dbReference type="HOGENOM" id="CLU_010194_25_0_1"/>
<dbReference type="InParanoid" id="Q6P5L8"/>
<dbReference type="OMA" id="WWSSVAN"/>
<dbReference type="OrthoDB" id="5327538at2759"/>
<dbReference type="PhylomeDB" id="Q6P5L8"/>
<dbReference type="TreeFam" id="TF101523"/>
<dbReference type="PRO" id="PR:Q6P5L8"/>
<dbReference type="Proteomes" id="UP000000437">
    <property type="component" value="Chromosome 10"/>
</dbReference>
<dbReference type="Bgee" id="ENSDARG00000002523">
    <property type="expression patterns" value="Expressed in mature ovarian follicle and 28 other cell types or tissues"/>
</dbReference>
<dbReference type="ExpressionAtlas" id="Q6P5L8">
    <property type="expression patterns" value="baseline and differential"/>
</dbReference>
<dbReference type="GO" id="GO:0005739">
    <property type="term" value="C:mitochondrion"/>
    <property type="evidence" value="ECO:0000250"/>
    <property type="project" value="UniProtKB"/>
</dbReference>
<dbReference type="GO" id="GO:0005777">
    <property type="term" value="C:peroxisome"/>
    <property type="evidence" value="ECO:0007669"/>
    <property type="project" value="UniProtKB-SubCell"/>
</dbReference>
<dbReference type="GO" id="GO:0016491">
    <property type="term" value="F:oxidoreductase activity"/>
    <property type="evidence" value="ECO:0007669"/>
    <property type="project" value="UniProtKB-KW"/>
</dbReference>
<dbReference type="CDD" id="cd09762">
    <property type="entry name" value="HSDL2_SDR_c"/>
    <property type="match status" value="1"/>
</dbReference>
<dbReference type="FunFam" id="3.40.50.720:FF:000301">
    <property type="entry name" value="Hydroxysteroid dehydrogenase like 2"/>
    <property type="match status" value="1"/>
</dbReference>
<dbReference type="Gene3D" id="3.40.50.720">
    <property type="entry name" value="NAD(P)-binding Rossmann-like Domain"/>
    <property type="match status" value="1"/>
</dbReference>
<dbReference type="Gene3D" id="3.30.1050.10">
    <property type="entry name" value="SCP2 sterol-binding domain"/>
    <property type="match status" value="1"/>
</dbReference>
<dbReference type="InterPro" id="IPR051935">
    <property type="entry name" value="HSDL2"/>
</dbReference>
<dbReference type="InterPro" id="IPR036291">
    <property type="entry name" value="NAD(P)-bd_dom_sf"/>
</dbReference>
<dbReference type="InterPro" id="IPR003033">
    <property type="entry name" value="SCP2_sterol-bd_dom"/>
</dbReference>
<dbReference type="InterPro" id="IPR036527">
    <property type="entry name" value="SCP2_sterol-bd_dom_sf"/>
</dbReference>
<dbReference type="InterPro" id="IPR002347">
    <property type="entry name" value="SDR_fam"/>
</dbReference>
<dbReference type="NCBIfam" id="NF006133">
    <property type="entry name" value="PRK08278.1"/>
    <property type="match status" value="1"/>
</dbReference>
<dbReference type="PANTHER" id="PTHR42808">
    <property type="entry name" value="HYDROXYSTEROID DEHYDROGENASE-LIKE PROTEIN 2"/>
    <property type="match status" value="1"/>
</dbReference>
<dbReference type="PANTHER" id="PTHR42808:SF3">
    <property type="entry name" value="HYDROXYSTEROID DEHYDROGENASE-LIKE PROTEIN 2"/>
    <property type="match status" value="1"/>
</dbReference>
<dbReference type="Pfam" id="PF00106">
    <property type="entry name" value="adh_short"/>
    <property type="match status" value="1"/>
</dbReference>
<dbReference type="Pfam" id="PF02036">
    <property type="entry name" value="SCP2"/>
    <property type="match status" value="1"/>
</dbReference>
<dbReference type="PRINTS" id="PR00081">
    <property type="entry name" value="GDHRDH"/>
</dbReference>
<dbReference type="SUPFAM" id="SSF51735">
    <property type="entry name" value="NAD(P)-binding Rossmann-fold domains"/>
    <property type="match status" value="1"/>
</dbReference>
<dbReference type="SUPFAM" id="SSF55718">
    <property type="entry name" value="SCP-like"/>
    <property type="match status" value="1"/>
</dbReference>
<name>HSDL2_DANRE</name>
<feature type="chain" id="PRO_0000319892" description="Hydroxysteroid dehydrogenase-like protein 2">
    <location>
        <begin position="1"/>
        <end position="415"/>
    </location>
</feature>
<feature type="domain" description="SCP2">
    <location>
        <begin position="304"/>
        <end position="412"/>
    </location>
</feature>
<feature type="active site" description="Proton acceptor" evidence="2">
    <location>
        <position position="168"/>
    </location>
</feature>
<feature type="binding site" evidence="1">
    <location>
        <begin position="17"/>
        <end position="23"/>
    </location>
    <ligand>
        <name>NADP(+)</name>
        <dbReference type="ChEBI" id="CHEBI:58349"/>
    </ligand>
</feature>
<feature type="binding site" evidence="1">
    <location>
        <position position="42"/>
    </location>
    <ligand>
        <name>NADP(+)</name>
        <dbReference type="ChEBI" id="CHEBI:58349"/>
    </ligand>
</feature>
<feature type="binding site" evidence="1">
    <location>
        <position position="74"/>
    </location>
    <ligand>
        <name>NADP(+)</name>
        <dbReference type="ChEBI" id="CHEBI:58349"/>
    </ligand>
</feature>
<feature type="binding site" evidence="1">
    <location>
        <position position="172"/>
    </location>
    <ligand>
        <name>NADP(+)</name>
        <dbReference type="ChEBI" id="CHEBI:58349"/>
    </ligand>
</feature>
<proteinExistence type="evidence at transcript level"/>
<protein>
    <recommendedName>
        <fullName>Hydroxysteroid dehydrogenase-like protein 2</fullName>
        <ecNumber>1.-.-.-</ecNumber>
    </recommendedName>
</protein>
<keyword id="KW-0496">Mitochondrion</keyword>
<keyword id="KW-0521">NADP</keyword>
<keyword id="KW-0560">Oxidoreductase</keyword>
<keyword id="KW-0576">Peroxisome</keyword>
<keyword id="KW-1185">Reference proteome</keyword>
<evidence type="ECO:0000250" key="1">
    <source>
        <dbReference type="UniProtKB" id="Q6YN16"/>
    </source>
</evidence>
<evidence type="ECO:0000255" key="2"/>
<evidence type="ECO:0000305" key="3"/>
<sequence>MLQNTGKLAGCTIFITGASRGIGKAIALKAAQDGANVVIAAKTADPHPKLPGTIYTAAAEIEAAGGKALPCIVDVRDEKQINDAVEQAVEKFGGIDILVNNASAINLTGTLQTPMKKADLMLGINLRGTYLTSKLCIPHLLKSKNPHILNLSPPLNLNPIWFKNHTAYTIAKYGMSMCVLGMAEEFRGSIAVNALWPKTAIQTAAMDMLGGSEVGKQCRKVEIMADAAYAIFKQPTSFTGQFVIDEDILKKEGIKDFDVYAVEPGHPLLPDFFLDGQPEDLVKHMEAHGATPAFTTAKADPVAAGPVSEMFNTIRGIISPEMVKTTQGVYKFNLAGEHAGVWYLDLKNDAGSAGNGEPPVKADVVMSMDSEDFVKMFGGKLKPTMAFMSGKLTIKGDMGLAIKLEKMMAMMKSKL</sequence>